<organism>
    <name type="scientific">Chlamydia muridarum (strain MoPn / Nigg)</name>
    <dbReference type="NCBI Taxonomy" id="243161"/>
    <lineage>
        <taxon>Bacteria</taxon>
        <taxon>Pseudomonadati</taxon>
        <taxon>Chlamydiota</taxon>
        <taxon>Chlamydiia</taxon>
        <taxon>Chlamydiales</taxon>
        <taxon>Chlamydiaceae</taxon>
        <taxon>Chlamydia/Chlamydophila group</taxon>
        <taxon>Chlamydia</taxon>
    </lineage>
</organism>
<protein>
    <recommendedName>
        <fullName evidence="1">Chromosomal replication initiator protein DnaA 1</fullName>
    </recommendedName>
</protein>
<dbReference type="EMBL" id="AE002160">
    <property type="protein sequence ID" value="AAF39363.1"/>
    <property type="molecule type" value="Genomic_DNA"/>
</dbReference>
<dbReference type="PIR" id="F81692">
    <property type="entry name" value="F81692"/>
</dbReference>
<dbReference type="SMR" id="Q9PKE4"/>
<dbReference type="GeneID" id="1245881"/>
<dbReference type="KEGG" id="cmu:TC_0521"/>
<dbReference type="eggNOG" id="COG0593">
    <property type="taxonomic scope" value="Bacteria"/>
</dbReference>
<dbReference type="HOGENOM" id="CLU_026910_3_2_0"/>
<dbReference type="OrthoDB" id="19837at2"/>
<dbReference type="Proteomes" id="UP000000800">
    <property type="component" value="Chromosome"/>
</dbReference>
<dbReference type="GO" id="GO:0005737">
    <property type="term" value="C:cytoplasm"/>
    <property type="evidence" value="ECO:0007669"/>
    <property type="project" value="UniProtKB-SubCell"/>
</dbReference>
<dbReference type="GO" id="GO:0005886">
    <property type="term" value="C:plasma membrane"/>
    <property type="evidence" value="ECO:0007669"/>
    <property type="project" value="TreeGrafter"/>
</dbReference>
<dbReference type="GO" id="GO:0005524">
    <property type="term" value="F:ATP binding"/>
    <property type="evidence" value="ECO:0007669"/>
    <property type="project" value="UniProtKB-UniRule"/>
</dbReference>
<dbReference type="GO" id="GO:0016887">
    <property type="term" value="F:ATP hydrolysis activity"/>
    <property type="evidence" value="ECO:0007669"/>
    <property type="project" value="InterPro"/>
</dbReference>
<dbReference type="GO" id="GO:0003688">
    <property type="term" value="F:DNA replication origin binding"/>
    <property type="evidence" value="ECO:0007669"/>
    <property type="project" value="UniProtKB-UniRule"/>
</dbReference>
<dbReference type="GO" id="GO:0008289">
    <property type="term" value="F:lipid binding"/>
    <property type="evidence" value="ECO:0007669"/>
    <property type="project" value="UniProtKB-KW"/>
</dbReference>
<dbReference type="GO" id="GO:0006270">
    <property type="term" value="P:DNA replication initiation"/>
    <property type="evidence" value="ECO:0007669"/>
    <property type="project" value="UniProtKB-UniRule"/>
</dbReference>
<dbReference type="GO" id="GO:0006275">
    <property type="term" value="P:regulation of DNA replication"/>
    <property type="evidence" value="ECO:0007669"/>
    <property type="project" value="UniProtKB-UniRule"/>
</dbReference>
<dbReference type="CDD" id="cd00009">
    <property type="entry name" value="AAA"/>
    <property type="match status" value="1"/>
</dbReference>
<dbReference type="CDD" id="cd06571">
    <property type="entry name" value="Bac_DnaA_C"/>
    <property type="match status" value="1"/>
</dbReference>
<dbReference type="Gene3D" id="1.10.1750.10">
    <property type="match status" value="1"/>
</dbReference>
<dbReference type="Gene3D" id="3.30.300.180">
    <property type="match status" value="1"/>
</dbReference>
<dbReference type="Gene3D" id="3.40.50.300">
    <property type="entry name" value="P-loop containing nucleotide triphosphate hydrolases"/>
    <property type="match status" value="1"/>
</dbReference>
<dbReference type="HAMAP" id="MF_00377">
    <property type="entry name" value="DnaA_bact"/>
    <property type="match status" value="1"/>
</dbReference>
<dbReference type="InterPro" id="IPR003593">
    <property type="entry name" value="AAA+_ATPase"/>
</dbReference>
<dbReference type="InterPro" id="IPR001957">
    <property type="entry name" value="Chromosome_initiator_DnaA"/>
</dbReference>
<dbReference type="InterPro" id="IPR020591">
    <property type="entry name" value="Chromosome_initiator_DnaA-like"/>
</dbReference>
<dbReference type="InterPro" id="IPR018312">
    <property type="entry name" value="Chromosome_initiator_DnaA_CS"/>
</dbReference>
<dbReference type="InterPro" id="IPR013159">
    <property type="entry name" value="DnaA_C"/>
</dbReference>
<dbReference type="InterPro" id="IPR013317">
    <property type="entry name" value="DnaA_dom"/>
</dbReference>
<dbReference type="InterPro" id="IPR038454">
    <property type="entry name" value="DnaA_N_sf"/>
</dbReference>
<dbReference type="InterPro" id="IPR027417">
    <property type="entry name" value="P-loop_NTPase"/>
</dbReference>
<dbReference type="InterPro" id="IPR010921">
    <property type="entry name" value="Trp_repressor/repl_initiator"/>
</dbReference>
<dbReference type="NCBIfam" id="NF009087">
    <property type="entry name" value="PRK12422.1"/>
    <property type="match status" value="1"/>
</dbReference>
<dbReference type="PANTHER" id="PTHR30050">
    <property type="entry name" value="CHROMOSOMAL REPLICATION INITIATOR PROTEIN DNAA"/>
    <property type="match status" value="1"/>
</dbReference>
<dbReference type="PANTHER" id="PTHR30050:SF2">
    <property type="entry name" value="CHROMOSOMAL REPLICATION INITIATOR PROTEIN DNAA"/>
    <property type="match status" value="1"/>
</dbReference>
<dbReference type="Pfam" id="PF00308">
    <property type="entry name" value="Bac_DnaA"/>
    <property type="match status" value="1"/>
</dbReference>
<dbReference type="Pfam" id="PF08299">
    <property type="entry name" value="Bac_DnaA_C"/>
    <property type="match status" value="1"/>
</dbReference>
<dbReference type="PRINTS" id="PR00051">
    <property type="entry name" value="DNAA"/>
</dbReference>
<dbReference type="SMART" id="SM00382">
    <property type="entry name" value="AAA"/>
    <property type="match status" value="1"/>
</dbReference>
<dbReference type="SMART" id="SM00760">
    <property type="entry name" value="Bac_DnaA_C"/>
    <property type="match status" value="1"/>
</dbReference>
<dbReference type="SUPFAM" id="SSF52540">
    <property type="entry name" value="P-loop containing nucleoside triphosphate hydrolases"/>
    <property type="match status" value="1"/>
</dbReference>
<dbReference type="SUPFAM" id="SSF48295">
    <property type="entry name" value="TrpR-like"/>
    <property type="match status" value="1"/>
</dbReference>
<dbReference type="PROSITE" id="PS01008">
    <property type="entry name" value="DNAA"/>
    <property type="match status" value="1"/>
</dbReference>
<feature type="chain" id="PRO_0000114157" description="Chromosomal replication initiator protein DnaA 1">
    <location>
        <begin position="1"/>
        <end position="456"/>
    </location>
</feature>
<feature type="region of interest" description="Domain I, interacts with DnaA modulators" evidence="1">
    <location>
        <begin position="1"/>
        <end position="68"/>
    </location>
</feature>
<feature type="region of interest" description="Domain II" evidence="1">
    <location>
        <begin position="68"/>
        <end position="101"/>
    </location>
</feature>
<feature type="region of interest" description="Domain III, AAA+ region" evidence="1">
    <location>
        <begin position="102"/>
        <end position="320"/>
    </location>
</feature>
<feature type="region of interest" description="Domain IV, binds dsDNA" evidence="1">
    <location>
        <begin position="321"/>
        <end position="456"/>
    </location>
</feature>
<feature type="binding site" evidence="1">
    <location>
        <position position="150"/>
    </location>
    <ligand>
        <name>ATP</name>
        <dbReference type="ChEBI" id="CHEBI:30616"/>
    </ligand>
</feature>
<feature type="binding site" evidence="1">
    <location>
        <position position="152"/>
    </location>
    <ligand>
        <name>ATP</name>
        <dbReference type="ChEBI" id="CHEBI:30616"/>
    </ligand>
</feature>
<feature type="binding site" evidence="1">
    <location>
        <position position="153"/>
    </location>
    <ligand>
        <name>ATP</name>
        <dbReference type="ChEBI" id="CHEBI:30616"/>
    </ligand>
</feature>
<feature type="binding site" evidence="1">
    <location>
        <position position="154"/>
    </location>
    <ligand>
        <name>ATP</name>
        <dbReference type="ChEBI" id="CHEBI:30616"/>
    </ligand>
</feature>
<gene>
    <name evidence="1" type="primary">dnaA1</name>
    <name type="ordered locus">TC_0521</name>
</gene>
<name>DNAA1_CHLMU</name>
<comment type="function">
    <text evidence="1">Plays an essential role in the initiation and regulation of chromosomal replication. ATP-DnaA binds to the origin of replication (oriC) to initiate formation of the DNA replication initiation complex once per cell cycle. Binds the DnaA box (a 9 base pair repeat at the origin) and separates the double-stranded (ds)DNA. Forms a right-handed helical filament on oriC DNA; dsDNA binds to the exterior of the filament while single-stranded (ss)DNA is stabiized in the filament's interior. The ATP-DnaA-oriC complex binds and stabilizes one strand of the AT-rich DNA unwinding element (DUE), permitting loading of DNA polymerase. After initiation quickly degrades to an ADP-DnaA complex that is not apt for DNA replication. Binds acidic phospholipids.</text>
</comment>
<comment type="subunit">
    <text evidence="1">Oligomerizes as a right-handed, spiral filament on DNA at oriC.</text>
</comment>
<comment type="subcellular location">
    <subcellularLocation>
        <location evidence="1">Cytoplasm</location>
    </subcellularLocation>
</comment>
<comment type="domain">
    <text evidence="1">Domain I is involved in oligomerization and binding regulators, domain II is flexibile and of varying length in different bacteria, domain III forms the AAA+ region, while domain IV binds dsDNA.</text>
</comment>
<comment type="similarity">
    <text evidence="1">Belongs to the DnaA family.</text>
</comment>
<evidence type="ECO:0000255" key="1">
    <source>
        <dbReference type="HAMAP-Rule" id="MF_00377"/>
    </source>
</evidence>
<proteinExistence type="inferred from homology"/>
<keyword id="KW-0067">ATP-binding</keyword>
<keyword id="KW-0963">Cytoplasm</keyword>
<keyword id="KW-0235">DNA replication</keyword>
<keyword id="KW-0238">DNA-binding</keyword>
<keyword id="KW-0446">Lipid-binding</keyword>
<keyword id="KW-0547">Nucleotide-binding</keyword>
<reference key="1">
    <citation type="journal article" date="2000" name="Nucleic Acids Res.">
        <title>Genome sequences of Chlamydia trachomatis MoPn and Chlamydia pneumoniae AR39.</title>
        <authorList>
            <person name="Read T.D."/>
            <person name="Brunham R.C."/>
            <person name="Shen C."/>
            <person name="Gill S.R."/>
            <person name="Heidelberg J.F."/>
            <person name="White O."/>
            <person name="Hickey E.K."/>
            <person name="Peterson J.D."/>
            <person name="Utterback T.R."/>
            <person name="Berry K.J."/>
            <person name="Bass S."/>
            <person name="Linher K.D."/>
            <person name="Weidman J.F."/>
            <person name="Khouri H.M."/>
            <person name="Craven B."/>
            <person name="Bowman C."/>
            <person name="Dodson R.J."/>
            <person name="Gwinn M.L."/>
            <person name="Nelson W.C."/>
            <person name="DeBoy R.T."/>
            <person name="Kolonay J.F."/>
            <person name="McClarty G."/>
            <person name="Salzberg S.L."/>
            <person name="Eisen J.A."/>
            <person name="Fraser C.M."/>
        </authorList>
    </citation>
    <scope>NUCLEOTIDE SEQUENCE [LARGE SCALE GENOMIC DNA]</scope>
    <source>
        <strain>MoPn / Nigg</strain>
    </source>
</reference>
<sequence length="456" mass="51937">MRAWEEFLLLQEKEIGTDTVNKWLRSLKVLCFDACNLYLEAKDSFQVTWFEEHIRHKVKANLINNNGKPIRVRVTSLDKSTPFKESQIQQEKTAYFTMQYGDIDPQMSFANFLVTPENDLPVRILQEFAKVSEQGKGFPFNPIYLFGPESSGKTHLMQAAVGILREAGVKTLYVSSQLFTEHLVSAIRSGEMQRFRAFYRNVEALFIEDIEVLSGKGATQEEFFHTFNSLHTEGKLIVISSIFAPGDLKAMEERLISRFEWGIAVPVSPLTREGLKSFLERRIEQLNIRIEETALDFLIQALSSHIKSLLHALTTLAKRVAYKKLSHQLLYQGDVEALLQDVLQAAEHIRLTPSGIVRATAQYYGVSPENILGRSQSREYVLPRQVAMFLCRQKLSLSYVKIGEVFSRDHSTVISSIRAISQKLDEDDRESDVSCGVQELTKRLSSAYQSLDLIVD</sequence>
<accession>Q9PKE4</accession>